<accession>Q71ZS2</accession>
<proteinExistence type="inferred from homology"/>
<comment type="function">
    <text evidence="1">Can catalyze the hydrolysis of ATP in the presence of single-stranded DNA, the ATP-dependent uptake of single-stranded DNA by duplex DNA, and the ATP-dependent hybridization of homologous single-stranded DNAs. It interacts with LexA causing its activation and leading to its autocatalytic cleavage.</text>
</comment>
<comment type="subcellular location">
    <subcellularLocation>
        <location evidence="1">Cytoplasm</location>
    </subcellularLocation>
</comment>
<comment type="similarity">
    <text evidence="1">Belongs to the RecA family.</text>
</comment>
<keyword id="KW-0067">ATP-binding</keyword>
<keyword id="KW-0963">Cytoplasm</keyword>
<keyword id="KW-0227">DNA damage</keyword>
<keyword id="KW-0233">DNA recombination</keyword>
<keyword id="KW-0234">DNA repair</keyword>
<keyword id="KW-0238">DNA-binding</keyword>
<keyword id="KW-0547">Nucleotide-binding</keyword>
<keyword id="KW-0742">SOS response</keyword>
<gene>
    <name evidence="1" type="primary">recA</name>
    <name type="ordered locus">LMOf2365_1417</name>
</gene>
<evidence type="ECO:0000255" key="1">
    <source>
        <dbReference type="HAMAP-Rule" id="MF_00268"/>
    </source>
</evidence>
<evidence type="ECO:0000256" key="2">
    <source>
        <dbReference type="SAM" id="MobiDB-lite"/>
    </source>
</evidence>
<organism>
    <name type="scientific">Listeria monocytogenes serotype 4b (strain F2365)</name>
    <dbReference type="NCBI Taxonomy" id="265669"/>
    <lineage>
        <taxon>Bacteria</taxon>
        <taxon>Bacillati</taxon>
        <taxon>Bacillota</taxon>
        <taxon>Bacilli</taxon>
        <taxon>Bacillales</taxon>
        <taxon>Listeriaceae</taxon>
        <taxon>Listeria</taxon>
    </lineage>
</organism>
<name>RECA_LISMF</name>
<protein>
    <recommendedName>
        <fullName evidence="1">Protein RecA</fullName>
    </recommendedName>
    <alternativeName>
        <fullName evidence="1">Recombinase A</fullName>
    </alternativeName>
</protein>
<feature type="chain" id="PRO_0000122748" description="Protein RecA">
    <location>
        <begin position="1"/>
        <end position="348"/>
    </location>
</feature>
<feature type="region of interest" description="Disordered" evidence="2">
    <location>
        <begin position="325"/>
        <end position="348"/>
    </location>
</feature>
<feature type="compositionally biased region" description="Basic and acidic residues" evidence="2">
    <location>
        <begin position="325"/>
        <end position="335"/>
    </location>
</feature>
<feature type="compositionally biased region" description="Acidic residues" evidence="2">
    <location>
        <begin position="336"/>
        <end position="348"/>
    </location>
</feature>
<feature type="binding site" evidence="1">
    <location>
        <begin position="64"/>
        <end position="71"/>
    </location>
    <ligand>
        <name>ATP</name>
        <dbReference type="ChEBI" id="CHEBI:30616"/>
    </ligand>
</feature>
<sequence length="348" mass="37950">MNDRQAALDQALKQIEKQFGKGSIMKLGEHSDQNISTISSGSLALDIALGVGGYPRGRIIEVYGPESSGKTTVALHAIAEVQAQGGTAAFIDAEHALDPAYAKNLGVNIDELLLSQPDTGEQALEIAEALVRSGAVDMLVIDSVAALVPRAEIEGEMGDAHVGLQARLMSQALRKLSGVINKSKTIAIFINQIREKVGVMFGNPEITPGGRALKFYSTVRLEVRRAEQLKQGTDVMGNKTKIKVVKNKVAPPFRIAEVDIMYGEGISREGELVDMAAEVDVINKSGSWYSYKEERIGQGRENAKQYLKEHTDIRDEISKRVREEYEIDGSNKEPLDEGEETLSLLDDE</sequence>
<dbReference type="EMBL" id="AE017262">
    <property type="protein sequence ID" value="AAT04192.1"/>
    <property type="molecule type" value="Genomic_DNA"/>
</dbReference>
<dbReference type="RefSeq" id="WP_003725961.1">
    <property type="nucleotide sequence ID" value="NC_002973.6"/>
</dbReference>
<dbReference type="SMR" id="Q71ZS2"/>
<dbReference type="KEGG" id="lmf:LMOf2365_1417"/>
<dbReference type="HOGENOM" id="CLU_040469_3_2_9"/>
<dbReference type="GO" id="GO:0005829">
    <property type="term" value="C:cytosol"/>
    <property type="evidence" value="ECO:0007669"/>
    <property type="project" value="TreeGrafter"/>
</dbReference>
<dbReference type="GO" id="GO:0005524">
    <property type="term" value="F:ATP binding"/>
    <property type="evidence" value="ECO:0007669"/>
    <property type="project" value="UniProtKB-UniRule"/>
</dbReference>
<dbReference type="GO" id="GO:0016887">
    <property type="term" value="F:ATP hydrolysis activity"/>
    <property type="evidence" value="ECO:0007669"/>
    <property type="project" value="InterPro"/>
</dbReference>
<dbReference type="GO" id="GO:0140664">
    <property type="term" value="F:ATP-dependent DNA damage sensor activity"/>
    <property type="evidence" value="ECO:0007669"/>
    <property type="project" value="InterPro"/>
</dbReference>
<dbReference type="GO" id="GO:0003684">
    <property type="term" value="F:damaged DNA binding"/>
    <property type="evidence" value="ECO:0007669"/>
    <property type="project" value="UniProtKB-UniRule"/>
</dbReference>
<dbReference type="GO" id="GO:0003697">
    <property type="term" value="F:single-stranded DNA binding"/>
    <property type="evidence" value="ECO:0007669"/>
    <property type="project" value="UniProtKB-UniRule"/>
</dbReference>
<dbReference type="GO" id="GO:0006310">
    <property type="term" value="P:DNA recombination"/>
    <property type="evidence" value="ECO:0007669"/>
    <property type="project" value="UniProtKB-UniRule"/>
</dbReference>
<dbReference type="GO" id="GO:0006281">
    <property type="term" value="P:DNA repair"/>
    <property type="evidence" value="ECO:0007669"/>
    <property type="project" value="UniProtKB-UniRule"/>
</dbReference>
<dbReference type="GO" id="GO:0009432">
    <property type="term" value="P:SOS response"/>
    <property type="evidence" value="ECO:0007669"/>
    <property type="project" value="UniProtKB-UniRule"/>
</dbReference>
<dbReference type="CDD" id="cd00983">
    <property type="entry name" value="RecA"/>
    <property type="match status" value="1"/>
</dbReference>
<dbReference type="FunFam" id="3.40.50.300:FF:000087">
    <property type="entry name" value="Recombinase RecA"/>
    <property type="match status" value="1"/>
</dbReference>
<dbReference type="Gene3D" id="3.40.50.300">
    <property type="entry name" value="P-loop containing nucleotide triphosphate hydrolases"/>
    <property type="match status" value="1"/>
</dbReference>
<dbReference type="HAMAP" id="MF_00268">
    <property type="entry name" value="RecA"/>
    <property type="match status" value="1"/>
</dbReference>
<dbReference type="InterPro" id="IPR003593">
    <property type="entry name" value="AAA+_ATPase"/>
</dbReference>
<dbReference type="InterPro" id="IPR013765">
    <property type="entry name" value="DNA_recomb/repair_RecA"/>
</dbReference>
<dbReference type="InterPro" id="IPR020584">
    <property type="entry name" value="DNA_recomb/repair_RecA_CS"/>
</dbReference>
<dbReference type="InterPro" id="IPR027417">
    <property type="entry name" value="P-loop_NTPase"/>
</dbReference>
<dbReference type="InterPro" id="IPR049261">
    <property type="entry name" value="RecA-like_C"/>
</dbReference>
<dbReference type="InterPro" id="IPR049428">
    <property type="entry name" value="RecA-like_N"/>
</dbReference>
<dbReference type="InterPro" id="IPR020588">
    <property type="entry name" value="RecA_ATP-bd"/>
</dbReference>
<dbReference type="InterPro" id="IPR023400">
    <property type="entry name" value="RecA_C_sf"/>
</dbReference>
<dbReference type="InterPro" id="IPR020587">
    <property type="entry name" value="RecA_monomer-monomer_interface"/>
</dbReference>
<dbReference type="NCBIfam" id="TIGR02012">
    <property type="entry name" value="tigrfam_recA"/>
    <property type="match status" value="1"/>
</dbReference>
<dbReference type="PANTHER" id="PTHR45900:SF1">
    <property type="entry name" value="MITOCHONDRIAL DNA REPAIR PROTEIN RECA HOMOLOG-RELATED"/>
    <property type="match status" value="1"/>
</dbReference>
<dbReference type="PANTHER" id="PTHR45900">
    <property type="entry name" value="RECA"/>
    <property type="match status" value="1"/>
</dbReference>
<dbReference type="Pfam" id="PF00154">
    <property type="entry name" value="RecA"/>
    <property type="match status" value="1"/>
</dbReference>
<dbReference type="Pfam" id="PF21096">
    <property type="entry name" value="RecA_C"/>
    <property type="match status" value="1"/>
</dbReference>
<dbReference type="PRINTS" id="PR00142">
    <property type="entry name" value="RECA"/>
</dbReference>
<dbReference type="SMART" id="SM00382">
    <property type="entry name" value="AAA"/>
    <property type="match status" value="1"/>
</dbReference>
<dbReference type="SUPFAM" id="SSF52540">
    <property type="entry name" value="P-loop containing nucleoside triphosphate hydrolases"/>
    <property type="match status" value="1"/>
</dbReference>
<dbReference type="SUPFAM" id="SSF54752">
    <property type="entry name" value="RecA protein, C-terminal domain"/>
    <property type="match status" value="1"/>
</dbReference>
<dbReference type="PROSITE" id="PS00321">
    <property type="entry name" value="RECA_1"/>
    <property type="match status" value="1"/>
</dbReference>
<dbReference type="PROSITE" id="PS50162">
    <property type="entry name" value="RECA_2"/>
    <property type="match status" value="1"/>
</dbReference>
<dbReference type="PROSITE" id="PS50163">
    <property type="entry name" value="RECA_3"/>
    <property type="match status" value="1"/>
</dbReference>
<reference key="1">
    <citation type="journal article" date="2004" name="Nucleic Acids Res.">
        <title>Whole genome comparisons of serotype 4b and 1/2a strains of the food-borne pathogen Listeria monocytogenes reveal new insights into the core genome components of this species.</title>
        <authorList>
            <person name="Nelson K.E."/>
            <person name="Fouts D.E."/>
            <person name="Mongodin E.F."/>
            <person name="Ravel J."/>
            <person name="DeBoy R.T."/>
            <person name="Kolonay J.F."/>
            <person name="Rasko D.A."/>
            <person name="Angiuoli S.V."/>
            <person name="Gill S.R."/>
            <person name="Paulsen I.T."/>
            <person name="Peterson J.D."/>
            <person name="White O."/>
            <person name="Nelson W.C."/>
            <person name="Nierman W.C."/>
            <person name="Beanan M.J."/>
            <person name="Brinkac L.M."/>
            <person name="Daugherty S.C."/>
            <person name="Dodson R.J."/>
            <person name="Durkin A.S."/>
            <person name="Madupu R."/>
            <person name="Haft D.H."/>
            <person name="Selengut J."/>
            <person name="Van Aken S.E."/>
            <person name="Khouri H.M."/>
            <person name="Fedorova N."/>
            <person name="Forberger H.A."/>
            <person name="Tran B."/>
            <person name="Kathariou S."/>
            <person name="Wonderling L.D."/>
            <person name="Uhlich G.A."/>
            <person name="Bayles D.O."/>
            <person name="Luchansky J.B."/>
            <person name="Fraser C.M."/>
        </authorList>
    </citation>
    <scope>NUCLEOTIDE SEQUENCE [LARGE SCALE GENOMIC DNA]</scope>
    <source>
        <strain>F2365</strain>
    </source>
</reference>